<sequence length="121" mass="13513">MARIAGINIPPQQHAEIGLTAIFGIGRTRARKICEAAGVPVTKKVKDLTDAELERIREHIGVFAVEGDLRREVQLSIKRLIDLGTYRGMRHKRGLPVRGQRTRTNARTRKGPRRAAASLKK</sequence>
<proteinExistence type="inferred from homology"/>
<feature type="chain" id="PRO_0000230480" description="Small ribosomal subunit protein uS13">
    <location>
        <begin position="1"/>
        <end position="121"/>
    </location>
</feature>
<feature type="region of interest" description="Disordered" evidence="2">
    <location>
        <begin position="92"/>
        <end position="121"/>
    </location>
</feature>
<accession>Q7VTA8</accession>
<gene>
    <name evidence="1" type="primary">rpsM</name>
    <name type="ordered locus">BP3639</name>
</gene>
<name>RS13_BORPE</name>
<reference key="1">
    <citation type="journal article" date="2003" name="Nat. Genet.">
        <title>Comparative analysis of the genome sequences of Bordetella pertussis, Bordetella parapertussis and Bordetella bronchiseptica.</title>
        <authorList>
            <person name="Parkhill J."/>
            <person name="Sebaihia M."/>
            <person name="Preston A."/>
            <person name="Murphy L.D."/>
            <person name="Thomson N.R."/>
            <person name="Harris D.E."/>
            <person name="Holden M.T.G."/>
            <person name="Churcher C.M."/>
            <person name="Bentley S.D."/>
            <person name="Mungall K.L."/>
            <person name="Cerdeno-Tarraga A.-M."/>
            <person name="Temple L."/>
            <person name="James K.D."/>
            <person name="Harris B."/>
            <person name="Quail M.A."/>
            <person name="Achtman M."/>
            <person name="Atkin R."/>
            <person name="Baker S."/>
            <person name="Basham D."/>
            <person name="Bason N."/>
            <person name="Cherevach I."/>
            <person name="Chillingworth T."/>
            <person name="Collins M."/>
            <person name="Cronin A."/>
            <person name="Davis P."/>
            <person name="Doggett J."/>
            <person name="Feltwell T."/>
            <person name="Goble A."/>
            <person name="Hamlin N."/>
            <person name="Hauser H."/>
            <person name="Holroyd S."/>
            <person name="Jagels K."/>
            <person name="Leather S."/>
            <person name="Moule S."/>
            <person name="Norberczak H."/>
            <person name="O'Neil S."/>
            <person name="Ormond D."/>
            <person name="Price C."/>
            <person name="Rabbinowitsch E."/>
            <person name="Rutter S."/>
            <person name="Sanders M."/>
            <person name="Saunders D."/>
            <person name="Seeger K."/>
            <person name="Sharp S."/>
            <person name="Simmonds M."/>
            <person name="Skelton J."/>
            <person name="Squares R."/>
            <person name="Squares S."/>
            <person name="Stevens K."/>
            <person name="Unwin L."/>
            <person name="Whitehead S."/>
            <person name="Barrell B.G."/>
            <person name="Maskell D.J."/>
        </authorList>
    </citation>
    <scope>NUCLEOTIDE SEQUENCE [LARGE SCALE GENOMIC DNA]</scope>
    <source>
        <strain>Tohama I / ATCC BAA-589 / NCTC 13251</strain>
    </source>
</reference>
<dbReference type="EMBL" id="BX640422">
    <property type="protein sequence ID" value="CAE43896.1"/>
    <property type="molecule type" value="Genomic_DNA"/>
</dbReference>
<dbReference type="RefSeq" id="NP_882148.1">
    <property type="nucleotide sequence ID" value="NC_002929.2"/>
</dbReference>
<dbReference type="RefSeq" id="WP_003806929.1">
    <property type="nucleotide sequence ID" value="NZ_CP039022.1"/>
</dbReference>
<dbReference type="SMR" id="Q7VTA8"/>
<dbReference type="STRING" id="257313.BP3639"/>
<dbReference type="PaxDb" id="257313-BP3639"/>
<dbReference type="GeneID" id="93206284"/>
<dbReference type="KEGG" id="bpe:BP3639"/>
<dbReference type="PATRIC" id="fig|257313.5.peg.3936"/>
<dbReference type="eggNOG" id="COG0099">
    <property type="taxonomic scope" value="Bacteria"/>
</dbReference>
<dbReference type="HOGENOM" id="CLU_103849_1_2_4"/>
<dbReference type="Proteomes" id="UP000002676">
    <property type="component" value="Chromosome"/>
</dbReference>
<dbReference type="GO" id="GO:0005829">
    <property type="term" value="C:cytosol"/>
    <property type="evidence" value="ECO:0007669"/>
    <property type="project" value="TreeGrafter"/>
</dbReference>
<dbReference type="GO" id="GO:0015935">
    <property type="term" value="C:small ribosomal subunit"/>
    <property type="evidence" value="ECO:0007669"/>
    <property type="project" value="TreeGrafter"/>
</dbReference>
<dbReference type="GO" id="GO:0019843">
    <property type="term" value="F:rRNA binding"/>
    <property type="evidence" value="ECO:0007669"/>
    <property type="project" value="UniProtKB-UniRule"/>
</dbReference>
<dbReference type="GO" id="GO:0003735">
    <property type="term" value="F:structural constituent of ribosome"/>
    <property type="evidence" value="ECO:0007669"/>
    <property type="project" value="InterPro"/>
</dbReference>
<dbReference type="GO" id="GO:0000049">
    <property type="term" value="F:tRNA binding"/>
    <property type="evidence" value="ECO:0007669"/>
    <property type="project" value="UniProtKB-UniRule"/>
</dbReference>
<dbReference type="GO" id="GO:0006412">
    <property type="term" value="P:translation"/>
    <property type="evidence" value="ECO:0007669"/>
    <property type="project" value="UniProtKB-UniRule"/>
</dbReference>
<dbReference type="FunFam" id="1.10.8.50:FF:000001">
    <property type="entry name" value="30S ribosomal protein S13"/>
    <property type="match status" value="1"/>
</dbReference>
<dbReference type="FunFam" id="4.10.910.10:FF:000001">
    <property type="entry name" value="30S ribosomal protein S13"/>
    <property type="match status" value="1"/>
</dbReference>
<dbReference type="Gene3D" id="1.10.8.50">
    <property type="match status" value="1"/>
</dbReference>
<dbReference type="Gene3D" id="4.10.910.10">
    <property type="entry name" value="30s ribosomal protein s13, domain 2"/>
    <property type="match status" value="1"/>
</dbReference>
<dbReference type="HAMAP" id="MF_01315">
    <property type="entry name" value="Ribosomal_uS13"/>
    <property type="match status" value="1"/>
</dbReference>
<dbReference type="InterPro" id="IPR027437">
    <property type="entry name" value="Rbsml_uS13_C"/>
</dbReference>
<dbReference type="InterPro" id="IPR001892">
    <property type="entry name" value="Ribosomal_uS13"/>
</dbReference>
<dbReference type="InterPro" id="IPR010979">
    <property type="entry name" value="Ribosomal_uS13-like_H2TH"/>
</dbReference>
<dbReference type="InterPro" id="IPR019980">
    <property type="entry name" value="Ribosomal_uS13_bac-type"/>
</dbReference>
<dbReference type="InterPro" id="IPR018269">
    <property type="entry name" value="Ribosomal_uS13_CS"/>
</dbReference>
<dbReference type="NCBIfam" id="TIGR03631">
    <property type="entry name" value="uS13_bact"/>
    <property type="match status" value="1"/>
</dbReference>
<dbReference type="PANTHER" id="PTHR10871">
    <property type="entry name" value="30S RIBOSOMAL PROTEIN S13/40S RIBOSOMAL PROTEIN S18"/>
    <property type="match status" value="1"/>
</dbReference>
<dbReference type="PANTHER" id="PTHR10871:SF1">
    <property type="entry name" value="SMALL RIBOSOMAL SUBUNIT PROTEIN US13M"/>
    <property type="match status" value="1"/>
</dbReference>
<dbReference type="Pfam" id="PF00416">
    <property type="entry name" value="Ribosomal_S13"/>
    <property type="match status" value="2"/>
</dbReference>
<dbReference type="PIRSF" id="PIRSF002134">
    <property type="entry name" value="Ribosomal_S13"/>
    <property type="match status" value="1"/>
</dbReference>
<dbReference type="SUPFAM" id="SSF46946">
    <property type="entry name" value="S13-like H2TH domain"/>
    <property type="match status" value="1"/>
</dbReference>
<dbReference type="PROSITE" id="PS00646">
    <property type="entry name" value="RIBOSOMAL_S13_1"/>
    <property type="match status" value="1"/>
</dbReference>
<dbReference type="PROSITE" id="PS50159">
    <property type="entry name" value="RIBOSOMAL_S13_2"/>
    <property type="match status" value="1"/>
</dbReference>
<comment type="function">
    <text evidence="1">Located at the top of the head of the 30S subunit, it contacts several helices of the 16S rRNA. In the 70S ribosome it contacts the 23S rRNA (bridge B1a) and protein L5 of the 50S subunit (bridge B1b), connecting the 2 subunits; these bridges are implicated in subunit movement. Contacts the tRNAs in the A and P-sites.</text>
</comment>
<comment type="subunit">
    <text evidence="1">Part of the 30S ribosomal subunit. Forms a loose heterodimer with protein S19. Forms two bridges to the 50S subunit in the 70S ribosome.</text>
</comment>
<comment type="similarity">
    <text evidence="1">Belongs to the universal ribosomal protein uS13 family.</text>
</comment>
<organism>
    <name type="scientific">Bordetella pertussis (strain Tohama I / ATCC BAA-589 / NCTC 13251)</name>
    <dbReference type="NCBI Taxonomy" id="257313"/>
    <lineage>
        <taxon>Bacteria</taxon>
        <taxon>Pseudomonadati</taxon>
        <taxon>Pseudomonadota</taxon>
        <taxon>Betaproteobacteria</taxon>
        <taxon>Burkholderiales</taxon>
        <taxon>Alcaligenaceae</taxon>
        <taxon>Bordetella</taxon>
    </lineage>
</organism>
<keyword id="KW-1185">Reference proteome</keyword>
<keyword id="KW-0687">Ribonucleoprotein</keyword>
<keyword id="KW-0689">Ribosomal protein</keyword>
<keyword id="KW-0694">RNA-binding</keyword>
<keyword id="KW-0699">rRNA-binding</keyword>
<keyword id="KW-0820">tRNA-binding</keyword>
<evidence type="ECO:0000255" key="1">
    <source>
        <dbReference type="HAMAP-Rule" id="MF_01315"/>
    </source>
</evidence>
<evidence type="ECO:0000256" key="2">
    <source>
        <dbReference type="SAM" id="MobiDB-lite"/>
    </source>
</evidence>
<evidence type="ECO:0000305" key="3"/>
<protein>
    <recommendedName>
        <fullName evidence="1">Small ribosomal subunit protein uS13</fullName>
    </recommendedName>
    <alternativeName>
        <fullName evidence="3">30S ribosomal protein S13</fullName>
    </alternativeName>
</protein>